<dbReference type="EC" id="1.1.1.17" evidence="1"/>
<dbReference type="EMBL" id="AP008232">
    <property type="protein sequence ID" value="BAE73290.1"/>
    <property type="molecule type" value="Genomic_DNA"/>
</dbReference>
<dbReference type="RefSeq" id="WP_011409880.1">
    <property type="nucleotide sequence ID" value="NC_007712.1"/>
</dbReference>
<dbReference type="SMR" id="Q2NX35"/>
<dbReference type="STRING" id="343509.SG0015"/>
<dbReference type="KEGG" id="sgl:SG0015"/>
<dbReference type="eggNOG" id="COG0246">
    <property type="taxonomic scope" value="Bacteria"/>
</dbReference>
<dbReference type="HOGENOM" id="CLU_036089_2_0_6"/>
<dbReference type="OrthoDB" id="271711at2"/>
<dbReference type="Proteomes" id="UP000001932">
    <property type="component" value="Chromosome"/>
</dbReference>
<dbReference type="GO" id="GO:0005829">
    <property type="term" value="C:cytosol"/>
    <property type="evidence" value="ECO:0007669"/>
    <property type="project" value="TreeGrafter"/>
</dbReference>
<dbReference type="GO" id="GO:0008926">
    <property type="term" value="F:mannitol-1-phosphate 5-dehydrogenase activity"/>
    <property type="evidence" value="ECO:0007669"/>
    <property type="project" value="UniProtKB-UniRule"/>
</dbReference>
<dbReference type="GO" id="GO:0019592">
    <property type="term" value="P:mannitol catabolic process"/>
    <property type="evidence" value="ECO:0007669"/>
    <property type="project" value="TreeGrafter"/>
</dbReference>
<dbReference type="FunFam" id="1.10.1040.10:FF:000009">
    <property type="entry name" value="Mannitol-1-phosphate 5-dehydrogenase"/>
    <property type="match status" value="1"/>
</dbReference>
<dbReference type="FunFam" id="3.40.50.720:FF:000075">
    <property type="entry name" value="Mannitol-1-phosphate 5-dehydrogenase"/>
    <property type="match status" value="1"/>
</dbReference>
<dbReference type="Gene3D" id="1.10.1040.10">
    <property type="entry name" value="N-(1-d-carboxylethyl)-l-norvaline Dehydrogenase, domain 2"/>
    <property type="match status" value="1"/>
</dbReference>
<dbReference type="Gene3D" id="3.40.50.720">
    <property type="entry name" value="NAD(P)-binding Rossmann-like Domain"/>
    <property type="match status" value="1"/>
</dbReference>
<dbReference type="HAMAP" id="MF_00196">
    <property type="entry name" value="Mannitol_dehydrog"/>
    <property type="match status" value="1"/>
</dbReference>
<dbReference type="InterPro" id="IPR008927">
    <property type="entry name" value="6-PGluconate_DH-like_C_sf"/>
</dbReference>
<dbReference type="InterPro" id="IPR013328">
    <property type="entry name" value="6PGD_dom2"/>
</dbReference>
<dbReference type="InterPro" id="IPR023028">
    <property type="entry name" value="Mannitol_1_phos_5_DH"/>
</dbReference>
<dbReference type="InterPro" id="IPR000669">
    <property type="entry name" value="Mannitol_DH"/>
</dbReference>
<dbReference type="InterPro" id="IPR013118">
    <property type="entry name" value="Mannitol_DH_C"/>
</dbReference>
<dbReference type="InterPro" id="IPR023027">
    <property type="entry name" value="Mannitol_DH_CS"/>
</dbReference>
<dbReference type="InterPro" id="IPR013131">
    <property type="entry name" value="Mannitol_DH_N"/>
</dbReference>
<dbReference type="InterPro" id="IPR036291">
    <property type="entry name" value="NAD(P)-bd_dom_sf"/>
</dbReference>
<dbReference type="NCBIfam" id="NF002646">
    <property type="entry name" value="PRK02318.1-2"/>
    <property type="match status" value="1"/>
</dbReference>
<dbReference type="NCBIfam" id="NF002647">
    <property type="entry name" value="PRK02318.1-3"/>
    <property type="match status" value="1"/>
</dbReference>
<dbReference type="NCBIfam" id="NF002650">
    <property type="entry name" value="PRK02318.2-2"/>
    <property type="match status" value="1"/>
</dbReference>
<dbReference type="NCBIfam" id="NF002652">
    <property type="entry name" value="PRK02318.2-5"/>
    <property type="match status" value="1"/>
</dbReference>
<dbReference type="PANTHER" id="PTHR30524:SF0">
    <property type="entry name" value="ALTRONATE OXIDOREDUCTASE-RELATED"/>
    <property type="match status" value="1"/>
</dbReference>
<dbReference type="PANTHER" id="PTHR30524">
    <property type="entry name" value="MANNITOL-1-PHOSPHATE 5-DEHYDROGENASE"/>
    <property type="match status" value="1"/>
</dbReference>
<dbReference type="Pfam" id="PF01232">
    <property type="entry name" value="Mannitol_dh"/>
    <property type="match status" value="1"/>
</dbReference>
<dbReference type="Pfam" id="PF08125">
    <property type="entry name" value="Mannitol_dh_C"/>
    <property type="match status" value="1"/>
</dbReference>
<dbReference type="PRINTS" id="PR00084">
    <property type="entry name" value="MTLDHDRGNASE"/>
</dbReference>
<dbReference type="SUPFAM" id="SSF48179">
    <property type="entry name" value="6-phosphogluconate dehydrogenase C-terminal domain-like"/>
    <property type="match status" value="1"/>
</dbReference>
<dbReference type="SUPFAM" id="SSF51735">
    <property type="entry name" value="NAD(P)-binding Rossmann-fold domains"/>
    <property type="match status" value="1"/>
</dbReference>
<dbReference type="PROSITE" id="PS00974">
    <property type="entry name" value="MANNITOL_DHGENASE"/>
    <property type="match status" value="1"/>
</dbReference>
<reference key="1">
    <citation type="journal article" date="2006" name="Genome Res.">
        <title>Massive genome erosion and functional adaptations provide insights into the symbiotic lifestyle of Sodalis glossinidius in the tsetse host.</title>
        <authorList>
            <person name="Toh H."/>
            <person name="Weiss B.L."/>
            <person name="Perkin S.A.H."/>
            <person name="Yamashita A."/>
            <person name="Oshima K."/>
            <person name="Hattori M."/>
            <person name="Aksoy S."/>
        </authorList>
    </citation>
    <scope>NUCLEOTIDE SEQUENCE [LARGE SCALE GENOMIC DNA]</scope>
    <source>
        <strain>morsitans</strain>
    </source>
</reference>
<gene>
    <name evidence="1" type="primary">mtlD</name>
    <name type="ordered locus">SG0015</name>
</gene>
<proteinExistence type="inferred from homology"/>
<organism>
    <name type="scientific">Sodalis glossinidius (strain morsitans)</name>
    <dbReference type="NCBI Taxonomy" id="343509"/>
    <lineage>
        <taxon>Bacteria</taxon>
        <taxon>Pseudomonadati</taxon>
        <taxon>Pseudomonadota</taxon>
        <taxon>Gammaproteobacteria</taxon>
        <taxon>Enterobacterales</taxon>
        <taxon>Bruguierivoracaceae</taxon>
        <taxon>Sodalis</taxon>
    </lineage>
</organism>
<keyword id="KW-0520">NAD</keyword>
<keyword id="KW-0560">Oxidoreductase</keyword>
<sequence>MKVLHFGAGNIGRGFIGKLLADAGVEVVFADVNQQVLDALNQRHQYQVRVVGEQAQVETVRGVSAVHSGSDDVVALIASVDLVTAAVGPQILERIAPAIARGLVKRHDGGGTQPLNIIACENMVRGTSQLKQHVLNALEPRYHAWVDQHVGFVDSAVDRIVPPVEAGSDDPLAVTVESFSEWILDKTQFKGVPPALGGMELTDNLMAFMERKLFTLNTGHAITAYLGQLAGHQTIRDAILDPAVRQTVKGAMEESGAVLINRYGFDARKHAAYINKILQRFENPYLHDDVERVGRQPLRKLGAGDRLIKPLRGTLEYGLGDANLVTGIAAAMHYHSDQDPQAKEWAALLAEVGPQAALAKVSGLEEDSEVVAQVVNAYNAMQ</sequence>
<name>MTLD_SODGM</name>
<protein>
    <recommendedName>
        <fullName evidence="1">Mannitol-1-phosphate 5-dehydrogenase</fullName>
        <ecNumber evidence="1">1.1.1.17</ecNumber>
    </recommendedName>
</protein>
<accession>Q2NX35</accession>
<evidence type="ECO:0000255" key="1">
    <source>
        <dbReference type="HAMAP-Rule" id="MF_00196"/>
    </source>
</evidence>
<comment type="catalytic activity">
    <reaction evidence="1">
        <text>D-mannitol 1-phosphate + NAD(+) = beta-D-fructose 6-phosphate + NADH + H(+)</text>
        <dbReference type="Rhea" id="RHEA:19661"/>
        <dbReference type="ChEBI" id="CHEBI:15378"/>
        <dbReference type="ChEBI" id="CHEBI:57540"/>
        <dbReference type="ChEBI" id="CHEBI:57634"/>
        <dbReference type="ChEBI" id="CHEBI:57945"/>
        <dbReference type="ChEBI" id="CHEBI:61381"/>
        <dbReference type="EC" id="1.1.1.17"/>
    </reaction>
</comment>
<comment type="similarity">
    <text evidence="1">Belongs to the mannitol dehydrogenase family.</text>
</comment>
<feature type="chain" id="PRO_1000011811" description="Mannitol-1-phosphate 5-dehydrogenase">
    <location>
        <begin position="1"/>
        <end position="382"/>
    </location>
</feature>
<feature type="binding site" evidence="1">
    <location>
        <begin position="3"/>
        <end position="14"/>
    </location>
    <ligand>
        <name>NAD(+)</name>
        <dbReference type="ChEBI" id="CHEBI:57540"/>
    </ligand>
</feature>